<reference key="1">
    <citation type="journal article" date="2002" name="Nucleic Acids Res.">
        <title>Genome sequence of Oceanobacillus iheyensis isolated from the Iheya Ridge and its unexpected adaptive capabilities to extreme environments.</title>
        <authorList>
            <person name="Takami H."/>
            <person name="Takaki Y."/>
            <person name="Uchiyama I."/>
        </authorList>
    </citation>
    <scope>NUCLEOTIDE SEQUENCE [LARGE SCALE GENOMIC DNA]</scope>
    <source>
        <strain>DSM 14371 / CIP 107618 / JCM 11309 / KCTC 3954 / HTE831</strain>
    </source>
</reference>
<evidence type="ECO:0000255" key="1">
    <source>
        <dbReference type="HAMAP-Rule" id="MF_00134"/>
    </source>
</evidence>
<dbReference type="EC" id="4.1.1.48" evidence="1"/>
<dbReference type="EMBL" id="BA000028">
    <property type="protein sequence ID" value="BAC12480.1"/>
    <property type="molecule type" value="Genomic_DNA"/>
</dbReference>
<dbReference type="RefSeq" id="WP_011064927.1">
    <property type="nucleotide sequence ID" value="NC_004193.1"/>
</dbReference>
<dbReference type="SMR" id="Q8ESU2"/>
<dbReference type="STRING" id="221109.gene:10732728"/>
<dbReference type="KEGG" id="oih:OB0524"/>
<dbReference type="eggNOG" id="COG0134">
    <property type="taxonomic scope" value="Bacteria"/>
</dbReference>
<dbReference type="HOGENOM" id="CLU_034247_2_1_9"/>
<dbReference type="OrthoDB" id="9804217at2"/>
<dbReference type="PhylomeDB" id="Q8ESU2"/>
<dbReference type="UniPathway" id="UPA00035">
    <property type="reaction ID" value="UER00043"/>
</dbReference>
<dbReference type="Proteomes" id="UP000000822">
    <property type="component" value="Chromosome"/>
</dbReference>
<dbReference type="GO" id="GO:0004425">
    <property type="term" value="F:indole-3-glycerol-phosphate synthase activity"/>
    <property type="evidence" value="ECO:0007669"/>
    <property type="project" value="UniProtKB-UniRule"/>
</dbReference>
<dbReference type="GO" id="GO:0004640">
    <property type="term" value="F:phosphoribosylanthranilate isomerase activity"/>
    <property type="evidence" value="ECO:0007669"/>
    <property type="project" value="TreeGrafter"/>
</dbReference>
<dbReference type="GO" id="GO:0000162">
    <property type="term" value="P:L-tryptophan biosynthetic process"/>
    <property type="evidence" value="ECO:0007669"/>
    <property type="project" value="UniProtKB-UniRule"/>
</dbReference>
<dbReference type="CDD" id="cd00331">
    <property type="entry name" value="IGPS"/>
    <property type="match status" value="1"/>
</dbReference>
<dbReference type="FunFam" id="3.20.20.70:FF:000024">
    <property type="entry name" value="Indole-3-glycerol phosphate synthase"/>
    <property type="match status" value="1"/>
</dbReference>
<dbReference type="Gene3D" id="3.20.20.70">
    <property type="entry name" value="Aldolase class I"/>
    <property type="match status" value="1"/>
</dbReference>
<dbReference type="HAMAP" id="MF_00134_B">
    <property type="entry name" value="IGPS_B"/>
    <property type="match status" value="1"/>
</dbReference>
<dbReference type="InterPro" id="IPR013785">
    <property type="entry name" value="Aldolase_TIM"/>
</dbReference>
<dbReference type="InterPro" id="IPR045186">
    <property type="entry name" value="Indole-3-glycerol_P_synth"/>
</dbReference>
<dbReference type="InterPro" id="IPR013798">
    <property type="entry name" value="Indole-3-glycerol_P_synth_dom"/>
</dbReference>
<dbReference type="InterPro" id="IPR001468">
    <property type="entry name" value="Indole-3-GlycerolPSynthase_CS"/>
</dbReference>
<dbReference type="InterPro" id="IPR011060">
    <property type="entry name" value="RibuloseP-bd_barrel"/>
</dbReference>
<dbReference type="NCBIfam" id="NF001371">
    <property type="entry name" value="PRK00278.1-3"/>
    <property type="match status" value="1"/>
</dbReference>
<dbReference type="NCBIfam" id="NF001377">
    <property type="entry name" value="PRK00278.2-4"/>
    <property type="match status" value="1"/>
</dbReference>
<dbReference type="PANTHER" id="PTHR22854:SF2">
    <property type="entry name" value="INDOLE-3-GLYCEROL-PHOSPHATE SYNTHASE"/>
    <property type="match status" value="1"/>
</dbReference>
<dbReference type="PANTHER" id="PTHR22854">
    <property type="entry name" value="TRYPTOPHAN BIOSYNTHESIS PROTEIN"/>
    <property type="match status" value="1"/>
</dbReference>
<dbReference type="Pfam" id="PF00218">
    <property type="entry name" value="IGPS"/>
    <property type="match status" value="1"/>
</dbReference>
<dbReference type="SUPFAM" id="SSF51366">
    <property type="entry name" value="Ribulose-phoshate binding barrel"/>
    <property type="match status" value="1"/>
</dbReference>
<dbReference type="PROSITE" id="PS00614">
    <property type="entry name" value="IGPS"/>
    <property type="match status" value="1"/>
</dbReference>
<keyword id="KW-0028">Amino-acid biosynthesis</keyword>
<keyword id="KW-0057">Aromatic amino acid biosynthesis</keyword>
<keyword id="KW-0210">Decarboxylase</keyword>
<keyword id="KW-0456">Lyase</keyword>
<keyword id="KW-1185">Reference proteome</keyword>
<keyword id="KW-0822">Tryptophan biosynthesis</keyword>
<protein>
    <recommendedName>
        <fullName evidence="1">Indole-3-glycerol phosphate synthase</fullName>
        <shortName evidence="1">IGPS</shortName>
        <ecNumber evidence="1">4.1.1.48</ecNumber>
    </recommendedName>
</protein>
<gene>
    <name evidence="1" type="primary">trpC</name>
    <name type="ordered locus">OB0524</name>
</gene>
<accession>Q8ESU2</accession>
<proteinExistence type="inferred from homology"/>
<sequence>MTFLAKILEEKQTEVNSRKQEKIDFGSRNIPVHSFIQLINQASSLSIIAEIKRASPSKGEIQMDIDPVEQAIKYEQAGASAISVLTDQRFFKGSLNDLQQVSEAVSIPVLCKDFIIDEIQIDDAKDAGASIILLILAALPLERFQELYNYATKQGLEVICEVHTAEELKNALTISPAIIGINNRNLKSFDVDLQTTKQLAQRVDTNKTIIISESGMRTASDATLAAESGAKAILVGETFMRSNQLETDFNNLRVPLVERSI</sequence>
<organism>
    <name type="scientific">Oceanobacillus iheyensis (strain DSM 14371 / CIP 107618 / JCM 11309 / KCTC 3954 / HTE831)</name>
    <dbReference type="NCBI Taxonomy" id="221109"/>
    <lineage>
        <taxon>Bacteria</taxon>
        <taxon>Bacillati</taxon>
        <taxon>Bacillota</taxon>
        <taxon>Bacilli</taxon>
        <taxon>Bacillales</taxon>
        <taxon>Bacillaceae</taxon>
        <taxon>Oceanobacillus</taxon>
    </lineage>
</organism>
<comment type="catalytic activity">
    <reaction evidence="1">
        <text>1-(2-carboxyphenylamino)-1-deoxy-D-ribulose 5-phosphate + H(+) = (1S,2R)-1-C-(indol-3-yl)glycerol 3-phosphate + CO2 + H2O</text>
        <dbReference type="Rhea" id="RHEA:23476"/>
        <dbReference type="ChEBI" id="CHEBI:15377"/>
        <dbReference type="ChEBI" id="CHEBI:15378"/>
        <dbReference type="ChEBI" id="CHEBI:16526"/>
        <dbReference type="ChEBI" id="CHEBI:58613"/>
        <dbReference type="ChEBI" id="CHEBI:58866"/>
        <dbReference type="EC" id="4.1.1.48"/>
    </reaction>
</comment>
<comment type="pathway">
    <text evidence="1">Amino-acid biosynthesis; L-tryptophan biosynthesis; L-tryptophan from chorismate: step 4/5.</text>
</comment>
<comment type="similarity">
    <text evidence="1">Belongs to the TrpC family.</text>
</comment>
<feature type="chain" id="PRO_1000057873" description="Indole-3-glycerol phosphate synthase">
    <location>
        <begin position="1"/>
        <end position="261"/>
    </location>
</feature>
<name>TRPC_OCEIH</name>